<comment type="function">
    <text evidence="1">One of the primary rRNA binding proteins, it binds directly near the 3'-end of the 23S rRNA, where it nucleates assembly of the 50S subunit.</text>
</comment>
<comment type="subunit">
    <text evidence="1">Part of the 50S ribosomal subunit. Forms a cluster with proteins L14 and L19.</text>
</comment>
<comment type="similarity">
    <text evidence="1">Belongs to the universal ribosomal protein uL3 family.</text>
</comment>
<feature type="chain" id="PRO_1000052154" description="Large ribosomal subunit protein uL3">
    <location>
        <begin position="1"/>
        <end position="208"/>
    </location>
</feature>
<feature type="region of interest" description="Disordered" evidence="2">
    <location>
        <begin position="116"/>
        <end position="148"/>
    </location>
</feature>
<organism>
    <name type="scientific">Streptococcus pyogenes serotype M5 (strain Manfredo)</name>
    <dbReference type="NCBI Taxonomy" id="160491"/>
    <lineage>
        <taxon>Bacteria</taxon>
        <taxon>Bacillati</taxon>
        <taxon>Bacillota</taxon>
        <taxon>Bacilli</taxon>
        <taxon>Lactobacillales</taxon>
        <taxon>Streptococcaceae</taxon>
        <taxon>Streptococcus</taxon>
    </lineage>
</organism>
<evidence type="ECO:0000255" key="1">
    <source>
        <dbReference type="HAMAP-Rule" id="MF_01325"/>
    </source>
</evidence>
<evidence type="ECO:0000256" key="2">
    <source>
        <dbReference type="SAM" id="MobiDB-lite"/>
    </source>
</evidence>
<evidence type="ECO:0000305" key="3"/>
<reference key="1">
    <citation type="journal article" date="2007" name="J. Bacteriol.">
        <title>Complete genome of acute rheumatic fever-associated serotype M5 Streptococcus pyogenes strain Manfredo.</title>
        <authorList>
            <person name="Holden M.T.G."/>
            <person name="Scott A."/>
            <person name="Cherevach I."/>
            <person name="Chillingworth T."/>
            <person name="Churcher C."/>
            <person name="Cronin A."/>
            <person name="Dowd L."/>
            <person name="Feltwell T."/>
            <person name="Hamlin N."/>
            <person name="Holroyd S."/>
            <person name="Jagels K."/>
            <person name="Moule S."/>
            <person name="Mungall K."/>
            <person name="Quail M.A."/>
            <person name="Price C."/>
            <person name="Rabbinowitsch E."/>
            <person name="Sharp S."/>
            <person name="Skelton J."/>
            <person name="Whitehead S."/>
            <person name="Barrell B.G."/>
            <person name="Kehoe M."/>
            <person name="Parkhill J."/>
        </authorList>
    </citation>
    <scope>NUCLEOTIDE SEQUENCE [LARGE SCALE GENOMIC DNA]</scope>
    <source>
        <strain>Manfredo</strain>
    </source>
</reference>
<dbReference type="EMBL" id="AM295007">
    <property type="protein sequence ID" value="CAM29386.1"/>
    <property type="molecule type" value="Genomic_DNA"/>
</dbReference>
<dbReference type="RefSeq" id="WP_002986659.1">
    <property type="nucleotide sequence ID" value="NC_009332.1"/>
</dbReference>
<dbReference type="SMR" id="A2RC14"/>
<dbReference type="GeneID" id="83689573"/>
<dbReference type="KEGG" id="spf:SpyM50044"/>
<dbReference type="HOGENOM" id="CLU_044142_4_1_9"/>
<dbReference type="GO" id="GO:0022625">
    <property type="term" value="C:cytosolic large ribosomal subunit"/>
    <property type="evidence" value="ECO:0007669"/>
    <property type="project" value="TreeGrafter"/>
</dbReference>
<dbReference type="GO" id="GO:0019843">
    <property type="term" value="F:rRNA binding"/>
    <property type="evidence" value="ECO:0007669"/>
    <property type="project" value="UniProtKB-UniRule"/>
</dbReference>
<dbReference type="GO" id="GO:0003735">
    <property type="term" value="F:structural constituent of ribosome"/>
    <property type="evidence" value="ECO:0007669"/>
    <property type="project" value="InterPro"/>
</dbReference>
<dbReference type="GO" id="GO:0006412">
    <property type="term" value="P:translation"/>
    <property type="evidence" value="ECO:0007669"/>
    <property type="project" value="UniProtKB-UniRule"/>
</dbReference>
<dbReference type="FunFam" id="2.40.30.10:FF:000004">
    <property type="entry name" value="50S ribosomal protein L3"/>
    <property type="match status" value="1"/>
</dbReference>
<dbReference type="FunFam" id="3.30.160.810:FF:000002">
    <property type="entry name" value="50S ribosomal protein L3"/>
    <property type="match status" value="1"/>
</dbReference>
<dbReference type="Gene3D" id="3.30.160.810">
    <property type="match status" value="1"/>
</dbReference>
<dbReference type="Gene3D" id="2.40.30.10">
    <property type="entry name" value="Translation factors"/>
    <property type="match status" value="1"/>
</dbReference>
<dbReference type="HAMAP" id="MF_01325_B">
    <property type="entry name" value="Ribosomal_uL3_B"/>
    <property type="match status" value="1"/>
</dbReference>
<dbReference type="InterPro" id="IPR000597">
    <property type="entry name" value="Ribosomal_uL3"/>
</dbReference>
<dbReference type="InterPro" id="IPR019927">
    <property type="entry name" value="Ribosomal_uL3_bac/org-type"/>
</dbReference>
<dbReference type="InterPro" id="IPR019926">
    <property type="entry name" value="Ribosomal_uL3_CS"/>
</dbReference>
<dbReference type="InterPro" id="IPR009000">
    <property type="entry name" value="Transl_B-barrel_sf"/>
</dbReference>
<dbReference type="NCBIfam" id="TIGR03625">
    <property type="entry name" value="L3_bact"/>
    <property type="match status" value="1"/>
</dbReference>
<dbReference type="PANTHER" id="PTHR11229">
    <property type="entry name" value="50S RIBOSOMAL PROTEIN L3"/>
    <property type="match status" value="1"/>
</dbReference>
<dbReference type="PANTHER" id="PTHR11229:SF16">
    <property type="entry name" value="LARGE RIBOSOMAL SUBUNIT PROTEIN UL3C"/>
    <property type="match status" value="1"/>
</dbReference>
<dbReference type="Pfam" id="PF00297">
    <property type="entry name" value="Ribosomal_L3"/>
    <property type="match status" value="1"/>
</dbReference>
<dbReference type="SUPFAM" id="SSF50447">
    <property type="entry name" value="Translation proteins"/>
    <property type="match status" value="1"/>
</dbReference>
<dbReference type="PROSITE" id="PS00474">
    <property type="entry name" value="RIBOSOMAL_L3"/>
    <property type="match status" value="1"/>
</dbReference>
<gene>
    <name evidence="1" type="primary">rplC</name>
    <name type="ordered locus">SpyM50044</name>
</gene>
<keyword id="KW-0687">Ribonucleoprotein</keyword>
<keyword id="KW-0689">Ribosomal protein</keyword>
<keyword id="KW-0694">RNA-binding</keyword>
<keyword id="KW-0699">rRNA-binding</keyword>
<proteinExistence type="inferred from homology"/>
<protein>
    <recommendedName>
        <fullName evidence="1">Large ribosomal subunit protein uL3</fullName>
    </recommendedName>
    <alternativeName>
        <fullName evidence="3">50S ribosomal protein L3</fullName>
    </alternativeName>
</protein>
<sequence length="208" mass="22426">MTKGILGKKVGMTQIFTESGEFIPVTVIEATPNVVLQVKTVETDGYEAVQVGFDDKREVLSNKPAKGHVAKANTAPKRFIREFKNIEGLEVGAELSVEQFEAGDVVDVTGTSKGKGFQGVIKRHGQSRGPMAHGSRYHRRPGSMGPVAPNRVFKNKRLAGRMGGNRVTVQNLEIVQVIPEKNVILVKGNVPGAKKSLITIKSAVKAAK</sequence>
<name>RL3_STRPG</name>
<accession>A2RC14</accession>